<keyword id="KW-0413">Isomerase</keyword>
<keyword id="KW-0539">Nucleus</keyword>
<keyword id="KW-1185">Reference proteome</keyword>
<keyword id="KW-0697">Rotamase</keyword>
<proteinExistence type="inferred from homology"/>
<dbReference type="EC" id="5.2.1.8"/>
<dbReference type="EMBL" id="CR382122">
    <property type="protein sequence ID" value="CAH02134.1"/>
    <property type="molecule type" value="Genomic_DNA"/>
</dbReference>
<dbReference type="RefSeq" id="XP_451741.1">
    <property type="nucleotide sequence ID" value="XM_451741.1"/>
</dbReference>
<dbReference type="SMR" id="Q6CWE8"/>
<dbReference type="FunCoup" id="Q6CWE8">
    <property type="interactions" value="601"/>
</dbReference>
<dbReference type="STRING" id="284590.Q6CWE8"/>
<dbReference type="PaxDb" id="284590-Q6CWE8"/>
<dbReference type="KEGG" id="kla:KLLA0_B04664g"/>
<dbReference type="eggNOG" id="KOG0552">
    <property type="taxonomic scope" value="Eukaryota"/>
</dbReference>
<dbReference type="HOGENOM" id="CLU_022297_3_1_1"/>
<dbReference type="InParanoid" id="Q6CWE8"/>
<dbReference type="OMA" id="CPPHMAY"/>
<dbReference type="Proteomes" id="UP000000598">
    <property type="component" value="Chromosome B"/>
</dbReference>
<dbReference type="GO" id="GO:0000785">
    <property type="term" value="C:chromatin"/>
    <property type="evidence" value="ECO:0007669"/>
    <property type="project" value="TreeGrafter"/>
</dbReference>
<dbReference type="GO" id="GO:0005730">
    <property type="term" value="C:nucleolus"/>
    <property type="evidence" value="ECO:0007669"/>
    <property type="project" value="UniProtKB-SubCell"/>
</dbReference>
<dbReference type="GO" id="GO:0003755">
    <property type="term" value="F:peptidyl-prolyl cis-trans isomerase activity"/>
    <property type="evidence" value="ECO:0007669"/>
    <property type="project" value="UniProtKB-KW"/>
</dbReference>
<dbReference type="Gene3D" id="3.10.50.40">
    <property type="match status" value="1"/>
</dbReference>
<dbReference type="Gene3D" id="2.60.120.340">
    <property type="entry name" value="Nucleoplasmin core domain"/>
    <property type="match status" value="1"/>
</dbReference>
<dbReference type="InterPro" id="IPR041232">
    <property type="entry name" value="NPL"/>
</dbReference>
<dbReference type="InterPro" id="IPR046357">
    <property type="entry name" value="PPIase_dom_sf"/>
</dbReference>
<dbReference type="InterPro" id="IPR001179">
    <property type="entry name" value="PPIase_FKBP_dom"/>
</dbReference>
<dbReference type="InterPro" id="IPR023566">
    <property type="entry name" value="PPIase_Fpr3/Fpr4-like"/>
</dbReference>
<dbReference type="PANTHER" id="PTHR43811:SF19">
    <property type="entry name" value="39 KDA FK506-BINDING NUCLEAR PROTEIN"/>
    <property type="match status" value="1"/>
</dbReference>
<dbReference type="PANTHER" id="PTHR43811">
    <property type="entry name" value="FKBP-TYPE PEPTIDYL-PROLYL CIS-TRANS ISOMERASE FKPA"/>
    <property type="match status" value="1"/>
</dbReference>
<dbReference type="Pfam" id="PF00254">
    <property type="entry name" value="FKBP_C"/>
    <property type="match status" value="1"/>
</dbReference>
<dbReference type="Pfam" id="PF17800">
    <property type="entry name" value="NPL"/>
    <property type="match status" value="1"/>
</dbReference>
<dbReference type="PIRSF" id="PIRSF001473">
    <property type="entry name" value="FK506-bp_FPR3"/>
    <property type="match status" value="1"/>
</dbReference>
<dbReference type="SUPFAM" id="SSF54534">
    <property type="entry name" value="FKBP-like"/>
    <property type="match status" value="1"/>
</dbReference>
<dbReference type="PROSITE" id="PS50059">
    <property type="entry name" value="FKBP_PPIASE"/>
    <property type="match status" value="1"/>
</dbReference>
<evidence type="ECO:0000250" key="1"/>
<evidence type="ECO:0000255" key="2">
    <source>
        <dbReference type="PROSITE-ProRule" id="PRU00277"/>
    </source>
</evidence>
<evidence type="ECO:0000256" key="3">
    <source>
        <dbReference type="SAM" id="MobiDB-lite"/>
    </source>
</evidence>
<evidence type="ECO:0000305" key="4"/>
<gene>
    <name type="primary">FPR3</name>
    <name type="ordered locus">KLLA0B04664g</name>
</gene>
<organism>
    <name type="scientific">Kluyveromyces lactis (strain ATCC 8585 / CBS 2359 / DSM 70799 / NBRC 1267 / NRRL Y-1140 / WM37)</name>
    <name type="common">Yeast</name>
    <name type="synonym">Candida sphaerica</name>
    <dbReference type="NCBI Taxonomy" id="284590"/>
    <lineage>
        <taxon>Eukaryota</taxon>
        <taxon>Fungi</taxon>
        <taxon>Dikarya</taxon>
        <taxon>Ascomycota</taxon>
        <taxon>Saccharomycotina</taxon>
        <taxon>Saccharomycetes</taxon>
        <taxon>Saccharomycetales</taxon>
        <taxon>Saccharomycetaceae</taxon>
        <taxon>Kluyveromyces</taxon>
    </lineage>
</organism>
<protein>
    <recommendedName>
        <fullName>FK506-binding protein 3</fullName>
        <ecNumber>5.2.1.8</ecNumber>
    </recommendedName>
    <alternativeName>
        <fullName>Peptidyl-prolyl cis-trans isomerase</fullName>
        <shortName>PPIase</shortName>
    </alternativeName>
    <alternativeName>
        <fullName>Rotamase</fullName>
    </alternativeName>
</protein>
<accession>Q6CWE8</accession>
<feature type="chain" id="PRO_0000233083" description="FK506-binding protein 3">
    <location>
        <begin position="1"/>
        <end position="418"/>
    </location>
</feature>
<feature type="domain" description="PPIase FKBP-type" evidence="2">
    <location>
        <begin position="332"/>
        <end position="418"/>
    </location>
</feature>
<feature type="region of interest" description="Disordered" evidence="3">
    <location>
        <begin position="49"/>
        <end position="133"/>
    </location>
</feature>
<feature type="region of interest" description="Disordered" evidence="3">
    <location>
        <begin position="172"/>
        <end position="273"/>
    </location>
</feature>
<feature type="region of interest" description="Disordered" evidence="3">
    <location>
        <begin position="289"/>
        <end position="309"/>
    </location>
</feature>
<feature type="compositionally biased region" description="Acidic residues" evidence="3">
    <location>
        <begin position="61"/>
        <end position="89"/>
    </location>
</feature>
<feature type="compositionally biased region" description="Basic residues" evidence="3">
    <location>
        <begin position="93"/>
        <end position="103"/>
    </location>
</feature>
<feature type="compositionally biased region" description="Acidic residues" evidence="3">
    <location>
        <begin position="108"/>
        <end position="133"/>
    </location>
</feature>
<feature type="compositionally biased region" description="Acidic residues" evidence="3">
    <location>
        <begin position="186"/>
        <end position="224"/>
    </location>
</feature>
<feature type="compositionally biased region" description="Basic and acidic residues" evidence="3">
    <location>
        <begin position="225"/>
        <end position="239"/>
    </location>
</feature>
<feature type="compositionally biased region" description="Acidic residues" evidence="3">
    <location>
        <begin position="251"/>
        <end position="264"/>
    </location>
</feature>
<name>FKBP3_KLULA</name>
<reference key="1">
    <citation type="journal article" date="2004" name="Nature">
        <title>Genome evolution in yeasts.</title>
        <authorList>
            <person name="Dujon B."/>
            <person name="Sherman D."/>
            <person name="Fischer G."/>
            <person name="Durrens P."/>
            <person name="Casaregola S."/>
            <person name="Lafontaine I."/>
            <person name="de Montigny J."/>
            <person name="Marck C."/>
            <person name="Neuveglise C."/>
            <person name="Talla E."/>
            <person name="Goffard N."/>
            <person name="Frangeul L."/>
            <person name="Aigle M."/>
            <person name="Anthouard V."/>
            <person name="Babour A."/>
            <person name="Barbe V."/>
            <person name="Barnay S."/>
            <person name="Blanchin S."/>
            <person name="Beckerich J.-M."/>
            <person name="Beyne E."/>
            <person name="Bleykasten C."/>
            <person name="Boisrame A."/>
            <person name="Boyer J."/>
            <person name="Cattolico L."/>
            <person name="Confanioleri F."/>
            <person name="de Daruvar A."/>
            <person name="Despons L."/>
            <person name="Fabre E."/>
            <person name="Fairhead C."/>
            <person name="Ferry-Dumazet H."/>
            <person name="Groppi A."/>
            <person name="Hantraye F."/>
            <person name="Hennequin C."/>
            <person name="Jauniaux N."/>
            <person name="Joyet P."/>
            <person name="Kachouri R."/>
            <person name="Kerrest A."/>
            <person name="Koszul R."/>
            <person name="Lemaire M."/>
            <person name="Lesur I."/>
            <person name="Ma L."/>
            <person name="Muller H."/>
            <person name="Nicaud J.-M."/>
            <person name="Nikolski M."/>
            <person name="Oztas S."/>
            <person name="Ozier-Kalogeropoulos O."/>
            <person name="Pellenz S."/>
            <person name="Potier S."/>
            <person name="Richard G.-F."/>
            <person name="Straub M.-L."/>
            <person name="Suleau A."/>
            <person name="Swennen D."/>
            <person name="Tekaia F."/>
            <person name="Wesolowski-Louvel M."/>
            <person name="Westhof E."/>
            <person name="Wirth B."/>
            <person name="Zeniou-Meyer M."/>
            <person name="Zivanovic Y."/>
            <person name="Bolotin-Fukuhara M."/>
            <person name="Thierry A."/>
            <person name="Bouchier C."/>
            <person name="Caudron B."/>
            <person name="Scarpelli C."/>
            <person name="Gaillardin C."/>
            <person name="Weissenbach J."/>
            <person name="Wincker P."/>
            <person name="Souciet J.-L."/>
        </authorList>
    </citation>
    <scope>NUCLEOTIDE SEQUENCE [LARGE SCALE GENOMIC DNA]</scope>
    <source>
        <strain>ATCC 8585 / CBS 2359 / DSM 70799 / NBRC 1267 / NRRL Y-1140 / WM37</strain>
    </source>
</reference>
<comment type="function">
    <text evidence="1">PPIases accelerate the folding of proteins. It catalyzes the cis-trans isomerization of proline imidic peptide bonds in oligopeptides (By similarity).</text>
</comment>
<comment type="catalytic activity">
    <reaction>
        <text>[protein]-peptidylproline (omega=180) = [protein]-peptidylproline (omega=0)</text>
        <dbReference type="Rhea" id="RHEA:16237"/>
        <dbReference type="Rhea" id="RHEA-COMP:10747"/>
        <dbReference type="Rhea" id="RHEA-COMP:10748"/>
        <dbReference type="ChEBI" id="CHEBI:83833"/>
        <dbReference type="ChEBI" id="CHEBI:83834"/>
        <dbReference type="EC" id="5.2.1.8"/>
    </reaction>
</comment>
<comment type="activity regulation">
    <text evidence="1">Inhibited by both FK506 and rapamycin.</text>
</comment>
<comment type="subcellular location">
    <subcellularLocation>
        <location evidence="1">Nucleus</location>
        <location evidence="1">Nucleolus</location>
    </subcellularLocation>
</comment>
<comment type="similarity">
    <text evidence="4">Belongs to the FKBP-type PPIase family. FKBP3/4 subfamily.</text>
</comment>
<sequence length="418" mass="47278">MSDLLPLAAYNLNIEPYTPTPAIDVTTPVTVRITMAAIDPEALDDEKNPSTLRIIKRNPDYDDEDDAGGLLGDYDEDELDISEEEEEEEEKSKSKKGKGKGKSKKQEEEEEEEEEDEDEGDEELIEIDTDDEFQEFVLATLSPKTQYQQSLDIVIAPEEEVQFIVTGSYRVSLTGNYVKHPFDAPGYDDEDDDEEDDESYDEDEDDYLTPDEEADLEELEDASDVEAKIQELVEKEQSKSKKNNKRKQPEPEEEEEEEEEEEEEQKLVEETKKNKKAKKEKKVEFKKDLEEGPTKKEEKKEEKKEKPKTKVLEGGIIIEDRVTGKGKACKKGSKVGMRYIGKLKNGKVFDKNTSGKPFVFNLGRGEVIKGWDIGVAGMAVGGERRIVIPAPYAYGKQALPGIPANSELTFDVKLVSLK</sequence>